<sequence>MANQHANHSINDFKQFVKKHPKLIKEVRKEQRSWQDVYENWVLFGESDPIWDPYREPEEASEAVPETPQKNDFVSKMVTAVKKMDVNQMNEQINKMSQSISSLQSLLNTFSGSGQKHSQPGSGQHPFSFRKD</sequence>
<reference key="1">
    <citation type="submission" date="1997-08" db="EMBL/GenBank/DDBJ databases">
        <title>Bacillus subtilis chromosomal region downstream nprE.</title>
        <authorList>
            <person name="Bertero M."/>
            <person name="Presecan E."/>
            <person name="Glaser P."/>
            <person name="Richou A."/>
            <person name="Danchin A."/>
        </authorList>
    </citation>
    <scope>NUCLEOTIDE SEQUENCE [GENOMIC DNA]</scope>
    <source>
        <strain>168</strain>
    </source>
</reference>
<reference key="2">
    <citation type="journal article" date="1997" name="Nature">
        <title>The complete genome sequence of the Gram-positive bacterium Bacillus subtilis.</title>
        <authorList>
            <person name="Kunst F."/>
            <person name="Ogasawara N."/>
            <person name="Moszer I."/>
            <person name="Albertini A.M."/>
            <person name="Alloni G."/>
            <person name="Azevedo V."/>
            <person name="Bertero M.G."/>
            <person name="Bessieres P."/>
            <person name="Bolotin A."/>
            <person name="Borchert S."/>
            <person name="Borriss R."/>
            <person name="Boursier L."/>
            <person name="Brans A."/>
            <person name="Braun M."/>
            <person name="Brignell S.C."/>
            <person name="Bron S."/>
            <person name="Brouillet S."/>
            <person name="Bruschi C.V."/>
            <person name="Caldwell B."/>
            <person name="Capuano V."/>
            <person name="Carter N.M."/>
            <person name="Choi S.-K."/>
            <person name="Codani J.-J."/>
            <person name="Connerton I.F."/>
            <person name="Cummings N.J."/>
            <person name="Daniel R.A."/>
            <person name="Denizot F."/>
            <person name="Devine K.M."/>
            <person name="Duesterhoeft A."/>
            <person name="Ehrlich S.D."/>
            <person name="Emmerson P.T."/>
            <person name="Entian K.-D."/>
            <person name="Errington J."/>
            <person name="Fabret C."/>
            <person name="Ferrari E."/>
            <person name="Foulger D."/>
            <person name="Fritz C."/>
            <person name="Fujita M."/>
            <person name="Fujita Y."/>
            <person name="Fuma S."/>
            <person name="Galizzi A."/>
            <person name="Galleron N."/>
            <person name="Ghim S.-Y."/>
            <person name="Glaser P."/>
            <person name="Goffeau A."/>
            <person name="Golightly E.J."/>
            <person name="Grandi G."/>
            <person name="Guiseppi G."/>
            <person name="Guy B.J."/>
            <person name="Haga K."/>
            <person name="Haiech J."/>
            <person name="Harwood C.R."/>
            <person name="Henaut A."/>
            <person name="Hilbert H."/>
            <person name="Holsappel S."/>
            <person name="Hosono S."/>
            <person name="Hullo M.-F."/>
            <person name="Itaya M."/>
            <person name="Jones L.-M."/>
            <person name="Joris B."/>
            <person name="Karamata D."/>
            <person name="Kasahara Y."/>
            <person name="Klaerr-Blanchard M."/>
            <person name="Klein C."/>
            <person name="Kobayashi Y."/>
            <person name="Koetter P."/>
            <person name="Koningstein G."/>
            <person name="Krogh S."/>
            <person name="Kumano M."/>
            <person name="Kurita K."/>
            <person name="Lapidus A."/>
            <person name="Lardinois S."/>
            <person name="Lauber J."/>
            <person name="Lazarevic V."/>
            <person name="Lee S.-M."/>
            <person name="Levine A."/>
            <person name="Liu H."/>
            <person name="Masuda S."/>
            <person name="Mauel C."/>
            <person name="Medigue C."/>
            <person name="Medina N."/>
            <person name="Mellado R.P."/>
            <person name="Mizuno M."/>
            <person name="Moestl D."/>
            <person name="Nakai S."/>
            <person name="Noback M."/>
            <person name="Noone D."/>
            <person name="O'Reilly M."/>
            <person name="Ogawa K."/>
            <person name="Ogiwara A."/>
            <person name="Oudega B."/>
            <person name="Park S.-H."/>
            <person name="Parro V."/>
            <person name="Pohl T.M."/>
            <person name="Portetelle D."/>
            <person name="Porwollik S."/>
            <person name="Prescott A.M."/>
            <person name="Presecan E."/>
            <person name="Pujic P."/>
            <person name="Purnelle B."/>
            <person name="Rapoport G."/>
            <person name="Rey M."/>
            <person name="Reynolds S."/>
            <person name="Rieger M."/>
            <person name="Rivolta C."/>
            <person name="Rocha E."/>
            <person name="Roche B."/>
            <person name="Rose M."/>
            <person name="Sadaie Y."/>
            <person name="Sato T."/>
            <person name="Scanlan E."/>
            <person name="Schleich S."/>
            <person name="Schroeter R."/>
            <person name="Scoffone F."/>
            <person name="Sekiguchi J."/>
            <person name="Sekowska A."/>
            <person name="Seror S.J."/>
            <person name="Serror P."/>
            <person name="Shin B.-S."/>
            <person name="Soldo B."/>
            <person name="Sorokin A."/>
            <person name="Tacconi E."/>
            <person name="Takagi T."/>
            <person name="Takahashi H."/>
            <person name="Takemaru K."/>
            <person name="Takeuchi M."/>
            <person name="Tamakoshi A."/>
            <person name="Tanaka T."/>
            <person name="Terpstra P."/>
            <person name="Tognoni A."/>
            <person name="Tosato V."/>
            <person name="Uchiyama S."/>
            <person name="Vandenbol M."/>
            <person name="Vannier F."/>
            <person name="Vassarotti A."/>
            <person name="Viari A."/>
            <person name="Wambutt R."/>
            <person name="Wedler E."/>
            <person name="Wedler H."/>
            <person name="Weitzenegger T."/>
            <person name="Winters P."/>
            <person name="Wipat A."/>
            <person name="Yamamoto H."/>
            <person name="Yamane K."/>
            <person name="Yasumoto K."/>
            <person name="Yata K."/>
            <person name="Yoshida K."/>
            <person name="Yoshikawa H.-F."/>
            <person name="Zumstein E."/>
            <person name="Yoshikawa H."/>
            <person name="Danchin A."/>
        </authorList>
    </citation>
    <scope>NUCLEOTIDE SEQUENCE [LARGE SCALE GENOMIC DNA]</scope>
    <source>
        <strain>168</strain>
    </source>
</reference>
<name>YLBD_BACSU</name>
<evidence type="ECO:0000256" key="1">
    <source>
        <dbReference type="SAM" id="MobiDB-lite"/>
    </source>
</evidence>
<organism>
    <name type="scientific">Bacillus subtilis (strain 168)</name>
    <dbReference type="NCBI Taxonomy" id="224308"/>
    <lineage>
        <taxon>Bacteria</taxon>
        <taxon>Bacillati</taxon>
        <taxon>Bacillota</taxon>
        <taxon>Bacilli</taxon>
        <taxon>Bacillales</taxon>
        <taxon>Bacillaceae</taxon>
        <taxon>Bacillus</taxon>
    </lineage>
</organism>
<accession>O34880</accession>
<accession>Q797T5</accession>
<dbReference type="EMBL" id="Z98682">
    <property type="protein sequence ID" value="CAB11350.1"/>
    <property type="molecule type" value="Genomic_DNA"/>
</dbReference>
<dbReference type="EMBL" id="AL009126">
    <property type="protein sequence ID" value="CAB13370.1"/>
    <property type="molecule type" value="Genomic_DNA"/>
</dbReference>
<dbReference type="PIR" id="A69874">
    <property type="entry name" value="A69874"/>
</dbReference>
<dbReference type="RefSeq" id="NP_389380.1">
    <property type="nucleotide sequence ID" value="NC_000964.3"/>
</dbReference>
<dbReference type="RefSeq" id="WP_003232233.1">
    <property type="nucleotide sequence ID" value="NZ_OZ025638.1"/>
</dbReference>
<dbReference type="SMR" id="O34880"/>
<dbReference type="FunCoup" id="O34880">
    <property type="interactions" value="83"/>
</dbReference>
<dbReference type="STRING" id="224308.BSU14970"/>
<dbReference type="PaxDb" id="224308-BSU14970"/>
<dbReference type="EnsemblBacteria" id="CAB13370">
    <property type="protein sequence ID" value="CAB13370"/>
    <property type="gene ID" value="BSU_14970"/>
</dbReference>
<dbReference type="GeneID" id="936929"/>
<dbReference type="KEGG" id="bsu:BSU14970"/>
<dbReference type="PATRIC" id="fig|224308.179.peg.1632"/>
<dbReference type="eggNOG" id="ENOG5032UYM">
    <property type="taxonomic scope" value="Bacteria"/>
</dbReference>
<dbReference type="InParanoid" id="O34880"/>
<dbReference type="OrthoDB" id="1655540at2"/>
<dbReference type="BioCyc" id="BSUB:BSU14970-MONOMER"/>
<dbReference type="Proteomes" id="UP000001570">
    <property type="component" value="Chromosome"/>
</dbReference>
<dbReference type="InterPro" id="IPR025953">
    <property type="entry name" value="YlbD_coat"/>
</dbReference>
<dbReference type="Pfam" id="PF14071">
    <property type="entry name" value="YlbD_coat"/>
    <property type="match status" value="1"/>
</dbReference>
<proteinExistence type="predicted"/>
<feature type="chain" id="PRO_0000361091" description="Uncharacterized protein YlbD">
    <location>
        <begin position="1"/>
        <end position="132"/>
    </location>
</feature>
<feature type="region of interest" description="Disordered" evidence="1">
    <location>
        <begin position="107"/>
        <end position="132"/>
    </location>
</feature>
<feature type="compositionally biased region" description="Polar residues" evidence="1">
    <location>
        <begin position="108"/>
        <end position="122"/>
    </location>
</feature>
<keyword id="KW-1185">Reference proteome</keyword>
<gene>
    <name type="primary">ylbD</name>
    <name type="ordered locus">BSU14970</name>
</gene>
<protein>
    <recommendedName>
        <fullName>Uncharacterized protein YlbD</fullName>
    </recommendedName>
</protein>